<keyword id="KW-0963">Cytoplasm</keyword>
<keyword id="KW-0378">Hydrolase</keyword>
<keyword id="KW-0460">Magnesium</keyword>
<keyword id="KW-0479">Metal-binding</keyword>
<evidence type="ECO:0000255" key="1">
    <source>
        <dbReference type="HAMAP-Rule" id="MF_00209"/>
    </source>
</evidence>
<feature type="chain" id="PRO_0000137483" description="Inorganic pyrophosphatase">
    <location>
        <begin position="1"/>
        <end position="176"/>
    </location>
</feature>
<feature type="binding site" evidence="1">
    <location>
        <position position="30"/>
    </location>
    <ligand>
        <name>substrate</name>
    </ligand>
</feature>
<feature type="binding site" evidence="1">
    <location>
        <position position="44"/>
    </location>
    <ligand>
        <name>substrate</name>
    </ligand>
</feature>
<feature type="binding site" evidence="1">
    <location>
        <position position="56"/>
    </location>
    <ligand>
        <name>substrate</name>
    </ligand>
</feature>
<feature type="binding site" evidence="1">
    <location>
        <position position="66"/>
    </location>
    <ligand>
        <name>Mg(2+)</name>
        <dbReference type="ChEBI" id="CHEBI:18420"/>
        <label>1</label>
    </ligand>
</feature>
<feature type="binding site" evidence="1">
    <location>
        <position position="71"/>
    </location>
    <ligand>
        <name>Mg(2+)</name>
        <dbReference type="ChEBI" id="CHEBI:18420"/>
        <label>1</label>
    </ligand>
</feature>
<feature type="binding site" evidence="1">
    <location>
        <position position="71"/>
    </location>
    <ligand>
        <name>Mg(2+)</name>
        <dbReference type="ChEBI" id="CHEBI:18420"/>
        <label>2</label>
    </ligand>
</feature>
<feature type="binding site" evidence="1">
    <location>
        <position position="103"/>
    </location>
    <ligand>
        <name>Mg(2+)</name>
        <dbReference type="ChEBI" id="CHEBI:18420"/>
        <label>1</label>
    </ligand>
</feature>
<feature type="binding site" evidence="1">
    <location>
        <position position="142"/>
    </location>
    <ligand>
        <name>substrate</name>
    </ligand>
</feature>
<dbReference type="EC" id="3.6.1.1" evidence="1"/>
<dbReference type="EMBL" id="AE014291">
    <property type="protein sequence ID" value="AAN30883.1"/>
    <property type="molecule type" value="Genomic_DNA"/>
</dbReference>
<dbReference type="EMBL" id="CP002997">
    <property type="protein sequence ID" value="AEM19300.1"/>
    <property type="molecule type" value="Genomic_DNA"/>
</dbReference>
<dbReference type="RefSeq" id="WP_002965058.1">
    <property type="nucleotide sequence ID" value="NZ_KN046804.1"/>
</dbReference>
<dbReference type="SMR" id="P65745"/>
<dbReference type="GeneID" id="97534731"/>
<dbReference type="KEGG" id="bms:BR1993"/>
<dbReference type="KEGG" id="bsi:BS1330_I1987"/>
<dbReference type="PATRIC" id="fig|204722.21.peg.3222"/>
<dbReference type="HOGENOM" id="CLU_073198_1_0_5"/>
<dbReference type="PhylomeDB" id="P65745"/>
<dbReference type="Proteomes" id="UP000007104">
    <property type="component" value="Chromosome I"/>
</dbReference>
<dbReference type="GO" id="GO:0005737">
    <property type="term" value="C:cytoplasm"/>
    <property type="evidence" value="ECO:0007669"/>
    <property type="project" value="UniProtKB-SubCell"/>
</dbReference>
<dbReference type="GO" id="GO:0004427">
    <property type="term" value="F:inorganic diphosphate phosphatase activity"/>
    <property type="evidence" value="ECO:0007669"/>
    <property type="project" value="UniProtKB-UniRule"/>
</dbReference>
<dbReference type="GO" id="GO:0000287">
    <property type="term" value="F:magnesium ion binding"/>
    <property type="evidence" value="ECO:0007669"/>
    <property type="project" value="UniProtKB-UniRule"/>
</dbReference>
<dbReference type="GO" id="GO:0006796">
    <property type="term" value="P:phosphate-containing compound metabolic process"/>
    <property type="evidence" value="ECO:0007669"/>
    <property type="project" value="InterPro"/>
</dbReference>
<dbReference type="CDD" id="cd00412">
    <property type="entry name" value="pyrophosphatase"/>
    <property type="match status" value="1"/>
</dbReference>
<dbReference type="FunFam" id="3.90.80.10:FF:000003">
    <property type="entry name" value="Inorganic pyrophosphatase"/>
    <property type="match status" value="1"/>
</dbReference>
<dbReference type="Gene3D" id="3.90.80.10">
    <property type="entry name" value="Inorganic pyrophosphatase"/>
    <property type="match status" value="1"/>
</dbReference>
<dbReference type="HAMAP" id="MF_00209">
    <property type="entry name" value="Inorganic_PPase"/>
    <property type="match status" value="1"/>
</dbReference>
<dbReference type="InterPro" id="IPR008162">
    <property type="entry name" value="Pyrophosphatase"/>
</dbReference>
<dbReference type="InterPro" id="IPR036649">
    <property type="entry name" value="Pyrophosphatase_sf"/>
</dbReference>
<dbReference type="NCBIfam" id="NF002317">
    <property type="entry name" value="PRK01250.1"/>
    <property type="match status" value="1"/>
</dbReference>
<dbReference type="PANTHER" id="PTHR10286">
    <property type="entry name" value="INORGANIC PYROPHOSPHATASE"/>
    <property type="match status" value="1"/>
</dbReference>
<dbReference type="Pfam" id="PF00719">
    <property type="entry name" value="Pyrophosphatase"/>
    <property type="match status" value="1"/>
</dbReference>
<dbReference type="SUPFAM" id="SSF50324">
    <property type="entry name" value="Inorganic pyrophosphatase"/>
    <property type="match status" value="1"/>
</dbReference>
<dbReference type="PROSITE" id="PS00387">
    <property type="entry name" value="PPASE"/>
    <property type="match status" value="1"/>
</dbReference>
<gene>
    <name evidence="1" type="primary">ppa</name>
    <name type="ordered locus">BR1993</name>
    <name type="ordered locus">BS1330_I1987</name>
</gene>
<comment type="function">
    <text evidence="1">Catalyzes the hydrolysis of inorganic pyrophosphate (PPi) forming two phosphate ions.</text>
</comment>
<comment type="catalytic activity">
    <reaction evidence="1">
        <text>diphosphate + H2O = 2 phosphate + H(+)</text>
        <dbReference type="Rhea" id="RHEA:24576"/>
        <dbReference type="ChEBI" id="CHEBI:15377"/>
        <dbReference type="ChEBI" id="CHEBI:15378"/>
        <dbReference type="ChEBI" id="CHEBI:33019"/>
        <dbReference type="ChEBI" id="CHEBI:43474"/>
        <dbReference type="EC" id="3.6.1.1"/>
    </reaction>
</comment>
<comment type="cofactor">
    <cofactor evidence="1">
        <name>Mg(2+)</name>
        <dbReference type="ChEBI" id="CHEBI:18420"/>
    </cofactor>
</comment>
<comment type="subunit">
    <text evidence="1">Homohexamer.</text>
</comment>
<comment type="subcellular location">
    <subcellularLocation>
        <location evidence="1">Cytoplasm</location>
    </subcellularLocation>
</comment>
<comment type="similarity">
    <text evidence="1">Belongs to the PPase family.</text>
</comment>
<reference key="1">
    <citation type="journal article" date="2002" name="Proc. Natl. Acad. Sci. U.S.A.">
        <title>The Brucella suis genome reveals fundamental similarities between animal and plant pathogens and symbionts.</title>
        <authorList>
            <person name="Paulsen I.T."/>
            <person name="Seshadri R."/>
            <person name="Nelson K.E."/>
            <person name="Eisen J.A."/>
            <person name="Heidelberg J.F."/>
            <person name="Read T.D."/>
            <person name="Dodson R.J."/>
            <person name="Umayam L.A."/>
            <person name="Brinkac L.M."/>
            <person name="Beanan M.J."/>
            <person name="Daugherty S.C."/>
            <person name="DeBoy R.T."/>
            <person name="Durkin A.S."/>
            <person name="Kolonay J.F."/>
            <person name="Madupu R."/>
            <person name="Nelson W.C."/>
            <person name="Ayodeji B."/>
            <person name="Kraul M."/>
            <person name="Shetty J."/>
            <person name="Malek J.A."/>
            <person name="Van Aken S.E."/>
            <person name="Riedmuller S."/>
            <person name="Tettelin H."/>
            <person name="Gill S.R."/>
            <person name="White O."/>
            <person name="Salzberg S.L."/>
            <person name="Hoover D.L."/>
            <person name="Lindler L.E."/>
            <person name="Halling S.M."/>
            <person name="Boyle S.M."/>
            <person name="Fraser C.M."/>
        </authorList>
    </citation>
    <scope>NUCLEOTIDE SEQUENCE [LARGE SCALE GENOMIC DNA]</scope>
    <source>
        <strain>1330</strain>
    </source>
</reference>
<reference key="2">
    <citation type="journal article" date="2011" name="J. Bacteriol.">
        <title>Revised genome sequence of Brucella suis 1330.</title>
        <authorList>
            <person name="Tae H."/>
            <person name="Shallom S."/>
            <person name="Settlage R."/>
            <person name="Preston D."/>
            <person name="Adams L.G."/>
            <person name="Garner H.R."/>
        </authorList>
    </citation>
    <scope>NUCLEOTIDE SEQUENCE [LARGE SCALE GENOMIC DNA]</scope>
    <source>
        <strain>1330</strain>
    </source>
</reference>
<sequence length="176" mass="19822">MNIDAISIGSNPPEDVNVIIEVPVGGQPIKYEMDKKAGALIVDRFLYTPMTYPGNYGFVPHTLSEDGDPIDVLVCNTRPLIPGCVINVRPIGVLVMEDNSGKDEKIIAVPSPHLTRRYEKIHDYTDMPEITLKQIAHFFEHYKDLEPGKWVKIGDWGDEDYARKFIVEAIERAKGK</sequence>
<organism>
    <name type="scientific">Brucella suis biovar 1 (strain 1330)</name>
    <dbReference type="NCBI Taxonomy" id="204722"/>
    <lineage>
        <taxon>Bacteria</taxon>
        <taxon>Pseudomonadati</taxon>
        <taxon>Pseudomonadota</taxon>
        <taxon>Alphaproteobacteria</taxon>
        <taxon>Hyphomicrobiales</taxon>
        <taxon>Brucellaceae</taxon>
        <taxon>Brucella/Ochrobactrum group</taxon>
        <taxon>Brucella</taxon>
    </lineage>
</organism>
<name>IPYR_BRUSU</name>
<proteinExistence type="inferred from homology"/>
<protein>
    <recommendedName>
        <fullName evidence="1">Inorganic pyrophosphatase</fullName>
        <ecNumber evidence="1">3.6.1.1</ecNumber>
    </recommendedName>
    <alternativeName>
        <fullName evidence="1">Pyrophosphate phospho-hydrolase</fullName>
        <shortName evidence="1">PPase</shortName>
    </alternativeName>
</protein>
<accession>P65745</accession>
<accession>G0K8L3</accession>
<accession>Q8YJK7</accession>